<accession>Q9ERQ8</accession>
<accession>Q811X4</accession>
<feature type="chain" id="PRO_0000077432" description="Carbonic anhydrase 7">
    <location>
        <begin position="1"/>
        <end position="264"/>
    </location>
</feature>
<feature type="domain" description="Alpha-carbonic anhydrase" evidence="3">
    <location>
        <begin position="5"/>
        <end position="262"/>
    </location>
</feature>
<feature type="active site" description="Proton donor/acceptor" evidence="1">
    <location>
        <position position="66"/>
    </location>
</feature>
<feature type="binding site" evidence="2">
    <location>
        <position position="96"/>
    </location>
    <ligand>
        <name>Zn(2+)</name>
        <dbReference type="ChEBI" id="CHEBI:29105"/>
        <note>catalytic</note>
    </ligand>
</feature>
<feature type="binding site" evidence="2">
    <location>
        <position position="98"/>
    </location>
    <ligand>
        <name>Zn(2+)</name>
        <dbReference type="ChEBI" id="CHEBI:29105"/>
        <note>catalytic</note>
    </ligand>
</feature>
<feature type="binding site" evidence="2">
    <location>
        <position position="121"/>
    </location>
    <ligand>
        <name>Zn(2+)</name>
        <dbReference type="ChEBI" id="CHEBI:29105"/>
        <note>catalytic</note>
    </ligand>
</feature>
<feature type="binding site" evidence="1">
    <location>
        <begin position="201"/>
        <end position="202"/>
    </location>
    <ligand>
        <name>substrate</name>
    </ligand>
</feature>
<proteinExistence type="evidence at protein level"/>
<name>CAH7_MOUSE</name>
<evidence type="ECO:0000250" key="1">
    <source>
        <dbReference type="UniProtKB" id="P00918"/>
    </source>
</evidence>
<evidence type="ECO:0000250" key="2">
    <source>
        <dbReference type="UniProtKB" id="P43166"/>
    </source>
</evidence>
<evidence type="ECO:0000255" key="3">
    <source>
        <dbReference type="PROSITE-ProRule" id="PRU01134"/>
    </source>
</evidence>
<evidence type="ECO:0000305" key="4"/>
<keyword id="KW-0963">Cytoplasm</keyword>
<keyword id="KW-0456">Lyase</keyword>
<keyword id="KW-0479">Metal-binding</keyword>
<keyword id="KW-1185">Reference proteome</keyword>
<keyword id="KW-0862">Zinc</keyword>
<reference key="1">
    <citation type="submission" date="2002-01" db="EMBL/GenBank/DDBJ databases">
        <title>Molecular identification of carbonic anhydrases (CA) and CA-related (CAR) genes.</title>
        <authorList>
            <person name="Chen Y."/>
            <person name="Huang C.-H."/>
        </authorList>
    </citation>
    <scope>NUCLEOTIDE SEQUENCE [MRNA]</scope>
</reference>
<reference key="2">
    <citation type="journal article" date="2004" name="Genome Res.">
        <title>The status, quality, and expansion of the NIH full-length cDNA project: the Mammalian Gene Collection (MGC).</title>
        <authorList>
            <consortium name="The MGC Project Team"/>
        </authorList>
    </citation>
    <scope>NUCLEOTIDE SEQUENCE [LARGE SCALE MRNA]</scope>
    <source>
        <strain>C57BL/6J</strain>
        <tissue>Embryo</tissue>
    </source>
</reference>
<reference key="3">
    <citation type="journal article" date="1995" name="Isozyme Bull.">
        <title>Conservation of the deduced amino acid sequences of human and mouse carbonic anhydrase VII cDNAs.</title>
        <authorList>
            <person name="Ling B."/>
            <person name="Bergenhem N.C.H."/>
            <person name="Tashian R.E."/>
        </authorList>
    </citation>
    <scope>NUCLEOTIDE SEQUENCE [MRNA] OF 10-264</scope>
    <source>
        <strain>C57BL/6J</strain>
        <tissue>Brain</tissue>
    </source>
</reference>
<reference key="4">
    <citation type="journal article" date="1998" name="Biochemistry">
        <title>The catalytic properties of murine carbonic anhydrase VII.</title>
        <authorList>
            <person name="Earnhardt J.N."/>
            <person name="Qian M."/>
            <person name="Tu C."/>
            <person name="Lakkis M.M."/>
            <person name="Bergenhem N.C."/>
            <person name="Laipis P.J."/>
            <person name="Tashian R.E."/>
            <person name="Silverman D.N."/>
        </authorList>
    </citation>
    <scope>CHARACTERIZATION</scope>
</reference>
<gene>
    <name type="primary">Ca7</name>
    <name type="synonym">Car7</name>
</gene>
<dbReference type="EC" id="4.2.1.1"/>
<dbReference type="EMBL" id="AY075021">
    <property type="protein sequence ID" value="AAL78169.1"/>
    <property type="molecule type" value="mRNA"/>
</dbReference>
<dbReference type="EMBL" id="BC094913">
    <property type="protein sequence ID" value="AAH94913.1"/>
    <property type="molecule type" value="mRNA"/>
</dbReference>
<dbReference type="EMBL" id="AF291660">
    <property type="protein sequence ID" value="AAG16230.1"/>
    <property type="molecule type" value="mRNA"/>
</dbReference>
<dbReference type="CCDS" id="CCDS22581.1"/>
<dbReference type="RefSeq" id="NP_001288093.1">
    <property type="nucleotide sequence ID" value="NM_001301164.1"/>
</dbReference>
<dbReference type="RefSeq" id="NP_001288094.1">
    <property type="nucleotide sequence ID" value="NM_001301165.1"/>
</dbReference>
<dbReference type="RefSeq" id="NP_444300.1">
    <property type="nucleotide sequence ID" value="NM_053070.3"/>
</dbReference>
<dbReference type="SMR" id="Q9ERQ8"/>
<dbReference type="FunCoup" id="Q9ERQ8">
    <property type="interactions" value="589"/>
</dbReference>
<dbReference type="STRING" id="10090.ENSMUSP00000052136"/>
<dbReference type="BindingDB" id="Q9ERQ8"/>
<dbReference type="ChEMBL" id="CHEMBL2216"/>
<dbReference type="DrugCentral" id="Q9ERQ8"/>
<dbReference type="PhosphoSitePlus" id="Q9ERQ8"/>
<dbReference type="CPTAC" id="non-CPTAC-3421"/>
<dbReference type="CPTAC" id="non-CPTAC-3693"/>
<dbReference type="PaxDb" id="10090-ENSMUSP00000052136"/>
<dbReference type="ProteomicsDB" id="265502"/>
<dbReference type="Antibodypedia" id="29327">
    <property type="antibodies" value="137 antibodies from 26 providers"/>
</dbReference>
<dbReference type="DNASU" id="12354"/>
<dbReference type="Ensembl" id="ENSMUST00000056051.11">
    <property type="protein sequence ID" value="ENSMUSP00000052136.5"/>
    <property type="gene ID" value="ENSMUSG00000031883.14"/>
</dbReference>
<dbReference type="GeneID" id="12354"/>
<dbReference type="KEGG" id="mmu:12354"/>
<dbReference type="UCSC" id="uc009nat.2">
    <property type="organism name" value="mouse"/>
</dbReference>
<dbReference type="AGR" id="MGI:103100"/>
<dbReference type="CTD" id="12354"/>
<dbReference type="MGI" id="MGI:103100">
    <property type="gene designation" value="Car7"/>
</dbReference>
<dbReference type="VEuPathDB" id="HostDB:ENSMUSG00000031883"/>
<dbReference type="eggNOG" id="KOG0382">
    <property type="taxonomic scope" value="Eukaryota"/>
</dbReference>
<dbReference type="GeneTree" id="ENSGT00940000159757"/>
<dbReference type="InParanoid" id="Q9ERQ8"/>
<dbReference type="OMA" id="GHTIQAN"/>
<dbReference type="OrthoDB" id="429145at2759"/>
<dbReference type="PhylomeDB" id="Q9ERQ8"/>
<dbReference type="TreeFam" id="TF316425"/>
<dbReference type="Reactome" id="R-MMU-1475029">
    <property type="pathway name" value="Reversible hydration of carbon dioxide"/>
</dbReference>
<dbReference type="BioGRID-ORCS" id="12354">
    <property type="hits" value="2 hits in 77 CRISPR screens"/>
</dbReference>
<dbReference type="PRO" id="PR:Q9ERQ8"/>
<dbReference type="Proteomes" id="UP000000589">
    <property type="component" value="Chromosome 8"/>
</dbReference>
<dbReference type="RNAct" id="Q9ERQ8">
    <property type="molecule type" value="protein"/>
</dbReference>
<dbReference type="Bgee" id="ENSMUSG00000031883">
    <property type="expression patterns" value="Expressed in yolk sac and 124 other cell types or tissues"/>
</dbReference>
<dbReference type="ExpressionAtlas" id="Q9ERQ8">
    <property type="expression patterns" value="baseline and differential"/>
</dbReference>
<dbReference type="GO" id="GO:0005829">
    <property type="term" value="C:cytosol"/>
    <property type="evidence" value="ECO:0000314"/>
    <property type="project" value="MGI"/>
</dbReference>
<dbReference type="GO" id="GO:0004089">
    <property type="term" value="F:carbonate dehydratase activity"/>
    <property type="evidence" value="ECO:0000315"/>
    <property type="project" value="MGI"/>
</dbReference>
<dbReference type="GO" id="GO:0008270">
    <property type="term" value="F:zinc ion binding"/>
    <property type="evidence" value="ECO:0007669"/>
    <property type="project" value="InterPro"/>
</dbReference>
<dbReference type="GO" id="GO:0070050">
    <property type="term" value="P:neuron cellular homeostasis"/>
    <property type="evidence" value="ECO:0000315"/>
    <property type="project" value="MGI"/>
</dbReference>
<dbReference type="GO" id="GO:0032849">
    <property type="term" value="P:positive regulation of cellular pH reduction"/>
    <property type="evidence" value="ECO:0000315"/>
    <property type="project" value="MGI"/>
</dbReference>
<dbReference type="GO" id="GO:0032230">
    <property type="term" value="P:positive regulation of synaptic transmission, GABAergic"/>
    <property type="evidence" value="ECO:0000316"/>
    <property type="project" value="MGI"/>
</dbReference>
<dbReference type="GO" id="GO:2001225">
    <property type="term" value="P:regulation of chloride transport"/>
    <property type="evidence" value="ECO:0000315"/>
    <property type="project" value="MGI"/>
</dbReference>
<dbReference type="CDD" id="cd03149">
    <property type="entry name" value="alpha_CA_VII"/>
    <property type="match status" value="1"/>
</dbReference>
<dbReference type="FunFam" id="3.10.200.10:FF:000001">
    <property type="entry name" value="Carbonic anhydrase 2"/>
    <property type="match status" value="1"/>
</dbReference>
<dbReference type="Gene3D" id="3.10.200.10">
    <property type="entry name" value="Alpha carbonic anhydrase"/>
    <property type="match status" value="1"/>
</dbReference>
<dbReference type="InterPro" id="IPR041890">
    <property type="entry name" value="Alpha_CA_VII"/>
</dbReference>
<dbReference type="InterPro" id="IPR001148">
    <property type="entry name" value="CA_dom"/>
</dbReference>
<dbReference type="InterPro" id="IPR036398">
    <property type="entry name" value="CA_dom_sf"/>
</dbReference>
<dbReference type="InterPro" id="IPR023561">
    <property type="entry name" value="Carbonic_anhydrase_a-class"/>
</dbReference>
<dbReference type="InterPro" id="IPR018338">
    <property type="entry name" value="Carbonic_anhydrase_a-class_CS"/>
</dbReference>
<dbReference type="PANTHER" id="PTHR18952">
    <property type="entry name" value="CARBONIC ANHYDRASE"/>
    <property type="match status" value="1"/>
</dbReference>
<dbReference type="PANTHER" id="PTHR18952:SF124">
    <property type="entry name" value="CARBONIC ANHYDRASE 7"/>
    <property type="match status" value="1"/>
</dbReference>
<dbReference type="Pfam" id="PF00194">
    <property type="entry name" value="Carb_anhydrase"/>
    <property type="match status" value="1"/>
</dbReference>
<dbReference type="SMART" id="SM01057">
    <property type="entry name" value="Carb_anhydrase"/>
    <property type="match status" value="1"/>
</dbReference>
<dbReference type="SUPFAM" id="SSF51069">
    <property type="entry name" value="Carbonic anhydrase"/>
    <property type="match status" value="1"/>
</dbReference>
<dbReference type="PROSITE" id="PS00162">
    <property type="entry name" value="ALPHA_CA_1"/>
    <property type="match status" value="1"/>
</dbReference>
<dbReference type="PROSITE" id="PS51144">
    <property type="entry name" value="ALPHA_CA_2"/>
    <property type="match status" value="1"/>
</dbReference>
<sequence length="264" mass="29915">MTGHHCWGYGQDDGPSNWHKLYPIAQGDRQSPINIISSQAVYSPSLQPLELFYEACMSLSITNNGHSVQVDFNDSDDRTVVSGGPLEGPYRLKQLHFHWGKKRDMGSEHTVDGKSFPSELHLVHWNAKKYSTFGEAAAAPDGLAVVGVFLETGDEHPSMNRLTDALYMVRFKDTKAQFSCFNPKCLLPTSRHYWTYPGSLTTPPLSESVTWIVLREPIRISERQMEKFRSLLFTSEDDERIHMVDNFRPPQPLKGRVVKASFQA</sequence>
<organism>
    <name type="scientific">Mus musculus</name>
    <name type="common">Mouse</name>
    <dbReference type="NCBI Taxonomy" id="10090"/>
    <lineage>
        <taxon>Eukaryota</taxon>
        <taxon>Metazoa</taxon>
        <taxon>Chordata</taxon>
        <taxon>Craniata</taxon>
        <taxon>Vertebrata</taxon>
        <taxon>Euteleostomi</taxon>
        <taxon>Mammalia</taxon>
        <taxon>Eutheria</taxon>
        <taxon>Euarchontoglires</taxon>
        <taxon>Glires</taxon>
        <taxon>Rodentia</taxon>
        <taxon>Myomorpha</taxon>
        <taxon>Muroidea</taxon>
        <taxon>Muridae</taxon>
        <taxon>Murinae</taxon>
        <taxon>Mus</taxon>
        <taxon>Mus</taxon>
    </lineage>
</organism>
<comment type="function">
    <text>Reversible hydration of carbon dioxide.</text>
</comment>
<comment type="catalytic activity">
    <reaction>
        <text>hydrogencarbonate + H(+) = CO2 + H2O</text>
        <dbReference type="Rhea" id="RHEA:10748"/>
        <dbReference type="ChEBI" id="CHEBI:15377"/>
        <dbReference type="ChEBI" id="CHEBI:15378"/>
        <dbReference type="ChEBI" id="CHEBI:16526"/>
        <dbReference type="ChEBI" id="CHEBI:17544"/>
        <dbReference type="EC" id="4.2.1.1"/>
    </reaction>
</comment>
<comment type="cofactor">
    <cofactor evidence="2">
        <name>Zn(2+)</name>
        <dbReference type="ChEBI" id="CHEBI:29105"/>
    </cofactor>
</comment>
<comment type="subcellular location">
    <subcellularLocation>
        <location evidence="4">Cytoplasm</location>
    </subcellularLocation>
</comment>
<comment type="similarity">
    <text evidence="4">Belongs to the alpha-carbonic anhydrase family.</text>
</comment>
<protein>
    <recommendedName>
        <fullName>Carbonic anhydrase 7</fullName>
        <ecNumber>4.2.1.1</ecNumber>
    </recommendedName>
    <alternativeName>
        <fullName>Carbonate dehydratase VII</fullName>
    </alternativeName>
    <alternativeName>
        <fullName>Carbonic anhydrase VII</fullName>
        <shortName>CA-VII</shortName>
    </alternativeName>
</protein>